<evidence type="ECO:0000250" key="1"/>
<evidence type="ECO:0000256" key="2">
    <source>
        <dbReference type="SAM" id="MobiDB-lite"/>
    </source>
</evidence>
<evidence type="ECO:0000269" key="3">
    <source>
    </source>
</evidence>
<evidence type="ECO:0000269" key="4">
    <source>
    </source>
</evidence>
<evidence type="ECO:0000305" key="5"/>
<dbReference type="EMBL" id="U87242">
    <property type="protein sequence ID" value="AAC45269.1"/>
    <property type="status" value="ALT_INIT"/>
    <property type="molecule type" value="Genomic_DNA"/>
</dbReference>
<dbReference type="EMBL" id="AL123456">
    <property type="protein sequence ID" value="CCP43978.1"/>
    <property type="molecule type" value="Genomic_DNA"/>
</dbReference>
<dbReference type="RefSeq" id="NP_215738.1">
    <property type="nucleotide sequence ID" value="NC_000962.3"/>
</dbReference>
<dbReference type="RefSeq" id="WP_003406258.1">
    <property type="nucleotide sequence ID" value="NZ_NVQJ01000039.1"/>
</dbReference>
<dbReference type="SMR" id="L0T905"/>
<dbReference type="STRING" id="83332.Rv1222"/>
<dbReference type="iPTMnet" id="L0T905"/>
<dbReference type="PaxDb" id="83332-Rv1222"/>
<dbReference type="GeneID" id="885196"/>
<dbReference type="KEGG" id="mtu:Rv1222"/>
<dbReference type="KEGG" id="mtv:RVBD_1222"/>
<dbReference type="TubercuList" id="Rv1222"/>
<dbReference type="eggNOG" id="COG5662">
    <property type="taxonomic scope" value="Bacteria"/>
</dbReference>
<dbReference type="InParanoid" id="L0T905"/>
<dbReference type="OrthoDB" id="4425192at2"/>
<dbReference type="Proteomes" id="UP000001584">
    <property type="component" value="Chromosome"/>
</dbReference>
<dbReference type="GO" id="GO:0005737">
    <property type="term" value="C:cytoplasm"/>
    <property type="evidence" value="ECO:0007669"/>
    <property type="project" value="UniProtKB-SubCell"/>
</dbReference>
<dbReference type="GO" id="GO:0043856">
    <property type="term" value="F:anti-sigma factor antagonist activity"/>
    <property type="evidence" value="ECO:0000314"/>
    <property type="project" value="MTBBASE"/>
</dbReference>
<dbReference type="GO" id="GO:0046872">
    <property type="term" value="F:metal ion binding"/>
    <property type="evidence" value="ECO:0007669"/>
    <property type="project" value="UniProtKB-KW"/>
</dbReference>
<dbReference type="GO" id="GO:0006355">
    <property type="term" value="P:regulation of DNA-templated transcription"/>
    <property type="evidence" value="ECO:0000314"/>
    <property type="project" value="MTBBASE"/>
</dbReference>
<dbReference type="Gene3D" id="1.10.10.1320">
    <property type="entry name" value="Anti-sigma factor, zinc-finger domain"/>
    <property type="match status" value="1"/>
</dbReference>
<dbReference type="InterPro" id="IPR048186">
    <property type="entry name" value="Anti_sigE_RseA-like"/>
</dbReference>
<dbReference type="InterPro" id="IPR041916">
    <property type="entry name" value="Anti_sigma_zinc_sf"/>
</dbReference>
<dbReference type="NCBIfam" id="NF041468">
    <property type="entry name" value="anti_sig_RseA"/>
    <property type="match status" value="1"/>
</dbReference>
<organism>
    <name type="scientific">Mycobacterium tuberculosis (strain ATCC 25618 / H37Rv)</name>
    <dbReference type="NCBI Taxonomy" id="83332"/>
    <lineage>
        <taxon>Bacteria</taxon>
        <taxon>Bacillati</taxon>
        <taxon>Actinomycetota</taxon>
        <taxon>Actinomycetes</taxon>
        <taxon>Mycobacteriales</taxon>
        <taxon>Mycobacteriaceae</taxon>
        <taxon>Mycobacterium</taxon>
        <taxon>Mycobacterium tuberculosis complex</taxon>
    </lineage>
</organism>
<name>RSEA_MYCTU</name>
<reference key="1">
    <citation type="journal article" date="1997" name="J. Bacteriol.">
        <title>A mycobacterial extracytoplasmic function sigma factor involved in survival following stress.</title>
        <authorList>
            <person name="Wu Q.L."/>
            <person name="Kong D."/>
            <person name="Lam K."/>
            <person name="Husson R.N."/>
        </authorList>
    </citation>
    <scope>NUCLEOTIDE SEQUENCE [GENOMIC DNA]</scope>
    <source>
        <strain>ATCC 25618 / H37Rv</strain>
    </source>
</reference>
<reference key="2">
    <citation type="journal article" date="1998" name="Nature">
        <title>Deciphering the biology of Mycobacterium tuberculosis from the complete genome sequence.</title>
        <authorList>
            <person name="Cole S.T."/>
            <person name="Brosch R."/>
            <person name="Parkhill J."/>
            <person name="Garnier T."/>
            <person name="Churcher C.M."/>
            <person name="Harris D.E."/>
            <person name="Gordon S.V."/>
            <person name="Eiglmeier K."/>
            <person name="Gas S."/>
            <person name="Barry C.E. III"/>
            <person name="Tekaia F."/>
            <person name="Badcock K."/>
            <person name="Basham D."/>
            <person name="Brown D."/>
            <person name="Chillingworth T."/>
            <person name="Connor R."/>
            <person name="Davies R.M."/>
            <person name="Devlin K."/>
            <person name="Feltwell T."/>
            <person name="Gentles S."/>
            <person name="Hamlin N."/>
            <person name="Holroyd S."/>
            <person name="Hornsby T."/>
            <person name="Jagels K."/>
            <person name="Krogh A."/>
            <person name="McLean J."/>
            <person name="Moule S."/>
            <person name="Murphy L.D."/>
            <person name="Oliver S."/>
            <person name="Osborne J."/>
            <person name="Quail M.A."/>
            <person name="Rajandream M.A."/>
            <person name="Rogers J."/>
            <person name="Rutter S."/>
            <person name="Seeger K."/>
            <person name="Skelton S."/>
            <person name="Squares S."/>
            <person name="Squares R."/>
            <person name="Sulston J.E."/>
            <person name="Taylor K."/>
            <person name="Whitehead S."/>
            <person name="Barrell B.G."/>
        </authorList>
    </citation>
    <scope>NUCLEOTIDE SEQUENCE [LARGE SCALE GENOMIC DNA]</scope>
    <source>
        <strain>ATCC 25618 / H37Rv</strain>
    </source>
</reference>
<reference key="3">
    <citation type="journal article" date="2008" name="J. Bacteriol.">
        <title>Evidence of complex transcriptional, translational, and posttranslational regulation of the extracytoplasmic function sigma factor sigmaE in Mycobacterium tuberculosis.</title>
        <authorList>
            <person name="Dona V."/>
            <person name="Rodrigue S."/>
            <person name="Dainese E."/>
            <person name="Palu G."/>
            <person name="Gaudreau L."/>
            <person name="Manganelli R."/>
            <person name="Provvedi R."/>
        </authorList>
    </citation>
    <scope>FUNCTION AS AN ANTI-SIGMA FACTOR</scope>
    <scope>INTERACTION WITH SIGE</scope>
    <source>
        <strain>ATCC 25618 / H37Rv</strain>
    </source>
</reference>
<reference key="4">
    <citation type="journal article" date="2010" name="Mol. Microbiol.">
        <title>RseA, the SigE specific anti-sigma factor of Mycobacterium tuberculosis, is inactivated by phosphorylation-dependent ClpC1P2 proteolysis.</title>
        <authorList>
            <person name="Barik S."/>
            <person name="Sureka K."/>
            <person name="Mukherjee P."/>
            <person name="Basu J."/>
            <person name="Kundu M."/>
        </authorList>
    </citation>
    <scope>FUNCTION AS AN ANTI-SIGMA FACTOR</scope>
    <scope>INTERACTION WITH SIGE; CLPC1 AND CLPX</scope>
    <scope>CLEAVAGE</scope>
    <scope>PHOSPHORYLATION AT THR-39</scope>
    <scope>MUTAGENESIS OF THR-39; CYS-70; CYS-73; THR-98 AND CYS-109</scope>
    <source>
        <strain>ATCC 25618 / H37Rv</strain>
    </source>
</reference>
<reference key="5">
    <citation type="journal article" date="2011" name="Mol. Cell. Proteomics">
        <title>Proteogenomic analysis of Mycobacterium tuberculosis by high resolution mass spectrometry.</title>
        <authorList>
            <person name="Kelkar D.S."/>
            <person name="Kumar D."/>
            <person name="Kumar P."/>
            <person name="Balakrishnan L."/>
            <person name="Muthusamy B."/>
            <person name="Yadav A.K."/>
            <person name="Shrivastava P."/>
            <person name="Marimuthu A."/>
            <person name="Anand S."/>
            <person name="Sundaram H."/>
            <person name="Kingsbury R."/>
            <person name="Harsha H.C."/>
            <person name="Nair B."/>
            <person name="Prasad T.S."/>
            <person name="Chauhan D.S."/>
            <person name="Katoch K."/>
            <person name="Katoch V.M."/>
            <person name="Kumar P."/>
            <person name="Chaerkady R."/>
            <person name="Ramachandran S."/>
            <person name="Dash D."/>
            <person name="Pandey A."/>
        </authorList>
    </citation>
    <scope>IDENTIFICATION BY MASS SPECTROMETRY [LARGE SCALE ANALYSIS]</scope>
    <source>
        <strain>ATCC 25618 / H37Rv</strain>
    </source>
</reference>
<protein>
    <recommendedName>
        <fullName>Anti-sigma-E factor RseA</fullName>
    </recommendedName>
    <alternativeName>
        <fullName>Regulator of SigE</fullName>
    </alternativeName>
    <alternativeName>
        <fullName>Sigma-E anti-sigma factor RseA</fullName>
    </alternativeName>
</protein>
<gene>
    <name type="primary">rseA</name>
    <name type="ordered locus">Rv1222</name>
</gene>
<accession>L0T905</accession>
<accession>O06290</accession>
<sequence length="154" mass="16250">MADPGSVGHVFRRAFSWLPAQFASQSDAPVGAPRQFRSTEHLSIEAIAAFVDGELRMNAHLRAAHHLSLCAQCAAEVDDQSRARAALRDSHPIRIPSTLLGLLSEIPRCPPEGPSKGSSGGSSQGPPDGAAAGFGDRFADGDGGNRGRQSRVRR</sequence>
<feature type="chain" id="PRO_0000422950" description="Anti-sigma-E factor RseA">
    <location>
        <begin position="1"/>
        <end position="154"/>
    </location>
</feature>
<feature type="region of interest" description="Disordered" evidence="2">
    <location>
        <begin position="104"/>
        <end position="154"/>
    </location>
</feature>
<feature type="compositionally biased region" description="Low complexity" evidence="2">
    <location>
        <begin position="124"/>
        <end position="136"/>
    </location>
</feature>
<feature type="binding site" evidence="1">
    <location>
        <position position="66"/>
    </location>
    <ligand>
        <name>Zn(2+)</name>
        <dbReference type="ChEBI" id="CHEBI:29105"/>
    </ligand>
</feature>
<feature type="binding site" evidence="1">
    <location>
        <position position="70"/>
    </location>
    <ligand>
        <name>Zn(2+)</name>
        <dbReference type="ChEBI" id="CHEBI:29105"/>
    </ligand>
</feature>
<feature type="binding site" evidence="1">
    <location>
        <position position="73"/>
    </location>
    <ligand>
        <name>Zn(2+)</name>
        <dbReference type="ChEBI" id="CHEBI:29105"/>
    </ligand>
</feature>
<feature type="modified residue" description="Phosphothreonine; by PknB" evidence="4">
    <location>
        <position position="39"/>
    </location>
</feature>
<feature type="mutagenesis site" description="Loss of phosphorylation, no protein degradation." evidence="4">
    <original>T</original>
    <variation>A</variation>
    <location>
        <position position="39"/>
    </location>
</feature>
<feature type="mutagenesis site" description="Considerably reduced interaction with SigE. Complete loss of interaction; when associated with A-73." evidence="4">
    <original>C</original>
    <variation>A</variation>
    <location>
        <position position="70"/>
    </location>
</feature>
<feature type="mutagenesis site" description="Considerably reduced interaction with SigE. Complete loss of interaction; when associated with A-70." evidence="4">
    <original>C</original>
    <variation>A</variation>
    <location>
        <position position="73"/>
    </location>
</feature>
<feature type="mutagenesis site" description="No change in phosphorylation." evidence="4">
    <original>T</original>
    <variation>A</variation>
    <location>
        <position position="98"/>
    </location>
</feature>
<feature type="mutagenesis site" description="No change in interaction with SigE." evidence="4">
    <original>C</original>
    <variation>A</variation>
    <location>
        <position position="109"/>
    </location>
</feature>
<comment type="function">
    <text evidence="3 4">An anti-sigma factor for extracytoplasmic function (ECF) sigma factor SigE. ECF sigma factors are held in an inactive form by an anti-sigma factor.</text>
</comment>
<comment type="cofactor">
    <cofactor evidence="1">
        <name>Zn(2+)</name>
        <dbReference type="ChEBI" id="CHEBI:29105"/>
    </cofactor>
    <text evidence="1">Binds 1 Zn(2+) ion per subunit.</text>
</comment>
<comment type="subunit">
    <text evidence="3 4">Interacts with cognate ECF RNA polymerase sigma factor SigE under reducing conditions; this inhibits the interaction of SigE with the RNA polymerase catalytic core.</text>
</comment>
<comment type="subcellular location">
    <subcellularLocation>
        <location evidence="5">Cytoplasm</location>
    </subcellularLocation>
</comment>
<comment type="PTM">
    <text evidence="4">Phosphorylated by PknB on Thr-39; can be dephosphorylated (at least in vitro) by PstP. Phosphorylation is the signal for subsequent degradation by the ClpC1-ClpP2 complex.</text>
</comment>
<comment type="PTM">
    <text>Degraded following vancomycin treatment (surface stress) by a ClpC1-ClpP2 complex.</text>
</comment>
<comment type="similarity">
    <text evidence="5">Belongs to the zinc-associated anti-sigma factor (ZAS) superfamily.</text>
</comment>
<comment type="sequence caution" evidence="5">
    <conflict type="erroneous initiation">
        <sequence resource="EMBL-CDS" id="AAC45269"/>
    </conflict>
    <text>Extended N-terminus.</text>
</comment>
<proteinExistence type="evidence at protein level"/>
<keyword id="KW-0963">Cytoplasm</keyword>
<keyword id="KW-0479">Metal-binding</keyword>
<keyword id="KW-0597">Phosphoprotein</keyword>
<keyword id="KW-1185">Reference proteome</keyword>
<keyword id="KW-0804">Transcription</keyword>
<keyword id="KW-0805">Transcription regulation</keyword>
<keyword id="KW-0862">Zinc</keyword>